<organism>
    <name type="scientific">Corynebacterium urealyticum (strain ATCC 43042 / DSM 7109)</name>
    <dbReference type="NCBI Taxonomy" id="504474"/>
    <lineage>
        <taxon>Bacteria</taxon>
        <taxon>Bacillati</taxon>
        <taxon>Actinomycetota</taxon>
        <taxon>Actinomycetes</taxon>
        <taxon>Mycobacteriales</taxon>
        <taxon>Corynebacteriaceae</taxon>
        <taxon>Corynebacterium</taxon>
    </lineage>
</organism>
<reference key="1">
    <citation type="journal article" date="2008" name="J. Biotechnol.">
        <title>The lifestyle of Corynebacterium urealyticum derived from its complete genome sequence established by pyrosequencing.</title>
        <authorList>
            <person name="Tauch A."/>
            <person name="Trost E."/>
            <person name="Tilker A."/>
            <person name="Ludewig U."/>
            <person name="Schneiker S."/>
            <person name="Goesmann A."/>
            <person name="Arnold W."/>
            <person name="Bekel T."/>
            <person name="Brinkrolf K."/>
            <person name="Brune I."/>
            <person name="Goetker S."/>
            <person name="Kalinowski J."/>
            <person name="Kamp P.-B."/>
            <person name="Lobo F.P."/>
            <person name="Viehoever P."/>
            <person name="Weisshaar B."/>
            <person name="Soriano F."/>
            <person name="Droege M."/>
            <person name="Puehler A."/>
        </authorList>
    </citation>
    <scope>NUCLEOTIDE SEQUENCE [LARGE SCALE GENOMIC DNA]</scope>
    <source>
        <strain>ATCC 43042 / DSM 7109</strain>
    </source>
</reference>
<sequence>MKLILTTAVDKLGVPGDIVEVKAGYGRNYLLPRGYAIVATRGAEKQIKDIQRAKADRVIRDQEHAEAVKAELEALSAVQVPVRTAQGGKLFGSVTSADVVAAVERAGGPKLDKHAIKLPKNSIKNTGKYAVDVKLVSGMTANLEFAVVDADK</sequence>
<feature type="chain" id="PRO_1000126895" description="Large ribosomal subunit protein bL9">
    <location>
        <begin position="1"/>
        <end position="152"/>
    </location>
</feature>
<keyword id="KW-1185">Reference proteome</keyword>
<keyword id="KW-0687">Ribonucleoprotein</keyword>
<keyword id="KW-0689">Ribosomal protein</keyword>
<keyword id="KW-0694">RNA-binding</keyword>
<keyword id="KW-0699">rRNA-binding</keyword>
<dbReference type="EMBL" id="AM942444">
    <property type="protein sequence ID" value="CAQ05942.1"/>
    <property type="molecule type" value="Genomic_DNA"/>
</dbReference>
<dbReference type="RefSeq" id="WP_012361209.1">
    <property type="nucleotide sequence ID" value="NC_010545.1"/>
</dbReference>
<dbReference type="SMR" id="B1VIZ6"/>
<dbReference type="STRING" id="504474.cu1985"/>
<dbReference type="GeneID" id="60604762"/>
<dbReference type="KEGG" id="cur:cu1985"/>
<dbReference type="eggNOG" id="COG0359">
    <property type="taxonomic scope" value="Bacteria"/>
</dbReference>
<dbReference type="HOGENOM" id="CLU_078938_5_1_11"/>
<dbReference type="Proteomes" id="UP000001727">
    <property type="component" value="Chromosome"/>
</dbReference>
<dbReference type="GO" id="GO:1990904">
    <property type="term" value="C:ribonucleoprotein complex"/>
    <property type="evidence" value="ECO:0007669"/>
    <property type="project" value="UniProtKB-KW"/>
</dbReference>
<dbReference type="GO" id="GO:0005840">
    <property type="term" value="C:ribosome"/>
    <property type="evidence" value="ECO:0007669"/>
    <property type="project" value="UniProtKB-KW"/>
</dbReference>
<dbReference type="GO" id="GO:0019843">
    <property type="term" value="F:rRNA binding"/>
    <property type="evidence" value="ECO:0007669"/>
    <property type="project" value="UniProtKB-UniRule"/>
</dbReference>
<dbReference type="GO" id="GO:0003735">
    <property type="term" value="F:structural constituent of ribosome"/>
    <property type="evidence" value="ECO:0007669"/>
    <property type="project" value="InterPro"/>
</dbReference>
<dbReference type="GO" id="GO:0006412">
    <property type="term" value="P:translation"/>
    <property type="evidence" value="ECO:0007669"/>
    <property type="project" value="UniProtKB-UniRule"/>
</dbReference>
<dbReference type="FunFam" id="3.40.5.10:FF:000003">
    <property type="entry name" value="50S ribosomal protein L9"/>
    <property type="match status" value="1"/>
</dbReference>
<dbReference type="Gene3D" id="3.10.430.100">
    <property type="entry name" value="Ribosomal protein L9, C-terminal domain"/>
    <property type="match status" value="1"/>
</dbReference>
<dbReference type="Gene3D" id="3.40.5.10">
    <property type="entry name" value="Ribosomal protein L9, N-terminal domain"/>
    <property type="match status" value="1"/>
</dbReference>
<dbReference type="HAMAP" id="MF_00503">
    <property type="entry name" value="Ribosomal_bL9"/>
    <property type="match status" value="1"/>
</dbReference>
<dbReference type="InterPro" id="IPR000244">
    <property type="entry name" value="Ribosomal_bL9"/>
</dbReference>
<dbReference type="InterPro" id="IPR009027">
    <property type="entry name" value="Ribosomal_bL9/RNase_H1_N"/>
</dbReference>
<dbReference type="InterPro" id="IPR020594">
    <property type="entry name" value="Ribosomal_bL9_bac/chp"/>
</dbReference>
<dbReference type="InterPro" id="IPR020069">
    <property type="entry name" value="Ribosomal_bL9_C"/>
</dbReference>
<dbReference type="InterPro" id="IPR036791">
    <property type="entry name" value="Ribosomal_bL9_C_sf"/>
</dbReference>
<dbReference type="InterPro" id="IPR020070">
    <property type="entry name" value="Ribosomal_bL9_N"/>
</dbReference>
<dbReference type="InterPro" id="IPR036935">
    <property type="entry name" value="Ribosomal_bL9_N_sf"/>
</dbReference>
<dbReference type="NCBIfam" id="TIGR00158">
    <property type="entry name" value="L9"/>
    <property type="match status" value="1"/>
</dbReference>
<dbReference type="PANTHER" id="PTHR21368">
    <property type="entry name" value="50S RIBOSOMAL PROTEIN L9"/>
    <property type="match status" value="1"/>
</dbReference>
<dbReference type="Pfam" id="PF03948">
    <property type="entry name" value="Ribosomal_L9_C"/>
    <property type="match status" value="1"/>
</dbReference>
<dbReference type="Pfam" id="PF01281">
    <property type="entry name" value="Ribosomal_L9_N"/>
    <property type="match status" value="1"/>
</dbReference>
<dbReference type="SUPFAM" id="SSF55658">
    <property type="entry name" value="L9 N-domain-like"/>
    <property type="match status" value="1"/>
</dbReference>
<dbReference type="SUPFAM" id="SSF55653">
    <property type="entry name" value="Ribosomal protein L9 C-domain"/>
    <property type="match status" value="1"/>
</dbReference>
<dbReference type="PROSITE" id="PS00651">
    <property type="entry name" value="RIBOSOMAL_L9"/>
    <property type="match status" value="1"/>
</dbReference>
<proteinExistence type="inferred from homology"/>
<name>RL9_CORU7</name>
<evidence type="ECO:0000255" key="1">
    <source>
        <dbReference type="HAMAP-Rule" id="MF_00503"/>
    </source>
</evidence>
<evidence type="ECO:0000305" key="2"/>
<gene>
    <name evidence="1" type="primary">rplI</name>
    <name type="ordered locus">cu1985</name>
</gene>
<accession>B1VIZ6</accession>
<comment type="function">
    <text evidence="1">Binds to the 23S rRNA.</text>
</comment>
<comment type="similarity">
    <text evidence="1">Belongs to the bacterial ribosomal protein bL9 family.</text>
</comment>
<protein>
    <recommendedName>
        <fullName evidence="1">Large ribosomal subunit protein bL9</fullName>
    </recommendedName>
    <alternativeName>
        <fullName evidence="2">50S ribosomal protein L9</fullName>
    </alternativeName>
</protein>